<keyword id="KW-0249">Electron transport</keyword>
<keyword id="KW-0472">Membrane</keyword>
<keyword id="KW-0496">Mitochondrion</keyword>
<keyword id="KW-0999">Mitochondrion inner membrane</keyword>
<keyword id="KW-0520">NAD</keyword>
<keyword id="KW-0679">Respiratory chain</keyword>
<keyword id="KW-1278">Translocase</keyword>
<keyword id="KW-0812">Transmembrane</keyword>
<keyword id="KW-1133">Transmembrane helix</keyword>
<keyword id="KW-0813">Transport</keyword>
<keyword id="KW-0830">Ubiquinone</keyword>
<comment type="function">
    <text evidence="1">Core subunit of the mitochondrial membrane respiratory chain NADH dehydrogenase (Complex I) which catalyzes electron transfer from NADH through the respiratory chain, using ubiquinone as an electron acceptor. Essential for the catalytic activity and assembly of complex I.</text>
</comment>
<comment type="catalytic activity">
    <reaction evidence="1">
        <text>a ubiquinone + NADH + 5 H(+)(in) = a ubiquinol + NAD(+) + 4 H(+)(out)</text>
        <dbReference type="Rhea" id="RHEA:29091"/>
        <dbReference type="Rhea" id="RHEA-COMP:9565"/>
        <dbReference type="Rhea" id="RHEA-COMP:9566"/>
        <dbReference type="ChEBI" id="CHEBI:15378"/>
        <dbReference type="ChEBI" id="CHEBI:16389"/>
        <dbReference type="ChEBI" id="CHEBI:17976"/>
        <dbReference type="ChEBI" id="CHEBI:57540"/>
        <dbReference type="ChEBI" id="CHEBI:57945"/>
        <dbReference type="EC" id="7.1.1.2"/>
    </reaction>
</comment>
<comment type="subunit">
    <text evidence="2">Core subunit of respiratory chain NADH dehydrogenase (Complex I) which is composed of 45 different subunits.</text>
</comment>
<comment type="subcellular location">
    <subcellularLocation>
        <location evidence="2">Mitochondrion inner membrane</location>
        <topology evidence="3">Multi-pass membrane protein</topology>
    </subcellularLocation>
</comment>
<comment type="similarity">
    <text evidence="4">Belongs to the complex I subunit 1 family.</text>
</comment>
<proteinExistence type="inferred from homology"/>
<reference key="1">
    <citation type="journal article" date="2002" name="J. Mol. Evol.">
        <title>Intra- and interfamily relationships of Vespertilionidae inferred by various molecular markers including SINE insertion data.</title>
        <authorList>
            <person name="Kawai K."/>
            <person name="Nikaido M."/>
            <person name="Harada M."/>
            <person name="Matsumura S."/>
            <person name="Lin L.K."/>
            <person name="Wu Y."/>
            <person name="Hasegawa M."/>
            <person name="Okada N."/>
        </authorList>
    </citation>
    <scope>NUCLEOTIDE SEQUENCE [GENOMIC DNA]</scope>
</reference>
<evidence type="ECO:0000250" key="1">
    <source>
        <dbReference type="UniProtKB" id="P03886"/>
    </source>
</evidence>
<evidence type="ECO:0000250" key="2">
    <source>
        <dbReference type="UniProtKB" id="P03887"/>
    </source>
</evidence>
<evidence type="ECO:0000255" key="3"/>
<evidence type="ECO:0000305" key="4"/>
<geneLocation type="mitochondrion"/>
<gene>
    <name type="primary">MT-ND1</name>
    <name type="synonym">MTND1</name>
    <name type="synonym">NADH1</name>
    <name type="synonym">ND1</name>
</gene>
<organism>
    <name type="scientific">Murina suilla</name>
    <name type="common">Brown tube-nosed bat</name>
    <name type="synonym">Vespertilio suillus</name>
    <dbReference type="NCBI Taxonomy" id="59489"/>
    <lineage>
        <taxon>Eukaryota</taxon>
        <taxon>Metazoa</taxon>
        <taxon>Chordata</taxon>
        <taxon>Craniata</taxon>
        <taxon>Vertebrata</taxon>
        <taxon>Euteleostomi</taxon>
        <taxon>Mammalia</taxon>
        <taxon>Eutheria</taxon>
        <taxon>Laurasiatheria</taxon>
        <taxon>Chiroptera</taxon>
        <taxon>Yangochiroptera</taxon>
        <taxon>Vespertilionidae</taxon>
        <taxon>Murina</taxon>
    </lineage>
</organism>
<sequence>MYLINLLAMIVPVLLAVAFLTLLERKVLGYMQLRKGPNIVGPYGLLQPIADAVKLFTKEPLQPLTSSPMLFIIAPTLALTLALTMWTPLPMPYPLMNMNLSMLFILALSSLAVYTIMWSGWASNSKYALIGALRAVAQTISYEVTLAIIILSLLLMNGSFTLLSMTTTQEYIWLLIPSWPLAMMWFISTLAETNRAPFDLTEGESELVSGFNVEYAGGPFALFFLAEYANIIMMNALTIILFLGAYHNSMVPELYTINFTIKTLLFTAFFLWIRASYPRFRYDQLMHLLWKNFLPLTLVMCMWHVALPIMLAGIPPQT</sequence>
<dbReference type="EC" id="7.1.1.2" evidence="1"/>
<dbReference type="EMBL" id="AB079835">
    <property type="protein sequence ID" value="BAB92060.1"/>
    <property type="molecule type" value="Genomic_DNA"/>
</dbReference>
<dbReference type="SMR" id="Q8M867"/>
<dbReference type="GO" id="GO:0005743">
    <property type="term" value="C:mitochondrial inner membrane"/>
    <property type="evidence" value="ECO:0000250"/>
    <property type="project" value="UniProtKB"/>
</dbReference>
<dbReference type="GO" id="GO:0008137">
    <property type="term" value="F:NADH dehydrogenase (ubiquinone) activity"/>
    <property type="evidence" value="ECO:0000250"/>
    <property type="project" value="UniProtKB"/>
</dbReference>
<dbReference type="GO" id="GO:0006120">
    <property type="term" value="P:mitochondrial electron transport, NADH to ubiquinone"/>
    <property type="evidence" value="ECO:0000250"/>
    <property type="project" value="UniProtKB"/>
</dbReference>
<dbReference type="GO" id="GO:0032981">
    <property type="term" value="P:mitochondrial respiratory chain complex I assembly"/>
    <property type="evidence" value="ECO:0000250"/>
    <property type="project" value="UniProtKB"/>
</dbReference>
<dbReference type="HAMAP" id="MF_01350">
    <property type="entry name" value="NDH1_NuoH"/>
    <property type="match status" value="1"/>
</dbReference>
<dbReference type="InterPro" id="IPR001694">
    <property type="entry name" value="NADH_UbQ_OxRdtase_su1/FPO"/>
</dbReference>
<dbReference type="InterPro" id="IPR018086">
    <property type="entry name" value="NADH_UbQ_OxRdtase_su1_CS"/>
</dbReference>
<dbReference type="PANTHER" id="PTHR11432">
    <property type="entry name" value="NADH DEHYDROGENASE SUBUNIT 1"/>
    <property type="match status" value="1"/>
</dbReference>
<dbReference type="PANTHER" id="PTHR11432:SF3">
    <property type="entry name" value="NADH-UBIQUINONE OXIDOREDUCTASE CHAIN 1"/>
    <property type="match status" value="1"/>
</dbReference>
<dbReference type="Pfam" id="PF00146">
    <property type="entry name" value="NADHdh"/>
    <property type="match status" value="1"/>
</dbReference>
<dbReference type="PROSITE" id="PS00667">
    <property type="entry name" value="COMPLEX1_ND1_1"/>
    <property type="match status" value="1"/>
</dbReference>
<dbReference type="PROSITE" id="PS00668">
    <property type="entry name" value="COMPLEX1_ND1_2"/>
    <property type="match status" value="1"/>
</dbReference>
<protein>
    <recommendedName>
        <fullName>NADH-ubiquinone oxidoreductase chain 1</fullName>
        <ecNumber evidence="1">7.1.1.2</ecNumber>
    </recommendedName>
    <alternativeName>
        <fullName>NADH dehydrogenase subunit 1</fullName>
    </alternativeName>
</protein>
<accession>Q8M867</accession>
<name>NU1M_MURSU</name>
<feature type="chain" id="PRO_0000117432" description="NADH-ubiquinone oxidoreductase chain 1">
    <location>
        <begin position="1"/>
        <end position="318"/>
    </location>
</feature>
<feature type="transmembrane region" description="Helical" evidence="3">
    <location>
        <begin position="3"/>
        <end position="23"/>
    </location>
</feature>
<feature type="transmembrane region" description="Helical" evidence="3">
    <location>
        <begin position="69"/>
        <end position="89"/>
    </location>
</feature>
<feature type="transmembrane region" description="Helical" evidence="3">
    <location>
        <begin position="102"/>
        <end position="122"/>
    </location>
</feature>
<feature type="transmembrane region" description="Helical" evidence="3">
    <location>
        <begin position="144"/>
        <end position="164"/>
    </location>
</feature>
<feature type="transmembrane region" description="Helical" evidence="3">
    <location>
        <begin position="171"/>
        <end position="191"/>
    </location>
</feature>
<feature type="transmembrane region" description="Helical" evidence="3">
    <location>
        <begin position="222"/>
        <end position="242"/>
    </location>
</feature>
<feature type="transmembrane region" description="Helical" evidence="3">
    <location>
        <begin position="253"/>
        <end position="273"/>
    </location>
</feature>
<feature type="transmembrane region" description="Helical" evidence="3">
    <location>
        <begin position="294"/>
        <end position="314"/>
    </location>
</feature>